<name>COMQ_BACSC</name>
<sequence>MKEIVHEKIQNLDLKEYLINFIDEKNHFSFGILSFKHYVALSGNRSSHILTLAGGIELLILAFDIFDDLEDEDNIEIKWMKIDPSLALNAATTLYTLGLETICSISNSAEFHRLTLKYALNAMQGQHEDLRNSPETEEECIQMMKQKAGSLTAMSAVLAAMLANGEFNQTIEDYAYKIGIIKQLENDYYGLVNDQRSDIRKKRKTLIYLFLNRKFNEASEKILKLINSHTSYHSFISDSSKFDELLFEAGLNQYVSMLIKLYEEEITASMNQLNINIKL</sequence>
<organism>
    <name type="scientific">Bacillus spizizenii</name>
    <name type="common">Bacillus subtilis subsp. spizizenii</name>
    <dbReference type="NCBI Taxonomy" id="96241"/>
    <lineage>
        <taxon>Bacteria</taxon>
        <taxon>Bacillati</taxon>
        <taxon>Bacillota</taxon>
        <taxon>Bacilli</taxon>
        <taxon>Bacillales</taxon>
        <taxon>Bacillaceae</taxon>
        <taxon>Bacillus</taxon>
    </lineage>
</organism>
<accession>P0DV09</accession>
<accession>Q8VLM0</accession>
<proteinExistence type="evidence at protein level"/>
<feature type="chain" id="PRO_0000454302" description="Tryptophan prenyltransferase ComQ">
    <location>
        <begin position="1"/>
        <end position="279"/>
    </location>
</feature>
<feature type="binding site" evidence="1">
    <location>
        <position position="67"/>
    </location>
    <ligand>
        <name>Mg(2+)</name>
        <dbReference type="ChEBI" id="CHEBI:18420"/>
        <label>1</label>
    </ligand>
</feature>
<feature type="binding site" evidence="1">
    <location>
        <position position="67"/>
    </location>
    <ligand>
        <name>Mg(2+)</name>
        <dbReference type="ChEBI" id="CHEBI:18420"/>
        <label>2</label>
    </ligand>
</feature>
<feature type="binding site" evidence="1">
    <location>
        <position position="71"/>
    </location>
    <ligand>
        <name>Mg(2+)</name>
        <dbReference type="ChEBI" id="CHEBI:18420"/>
        <label>1</label>
    </ligand>
</feature>
<feature type="binding site" evidence="1">
    <location>
        <position position="71"/>
    </location>
    <ligand>
        <name>Mg(2+)</name>
        <dbReference type="ChEBI" id="CHEBI:18420"/>
        <label>2</label>
    </ligand>
</feature>
<feature type="mutagenesis site" description="No change in ComX production or secretion." evidence="4">
    <original>I</original>
    <variation>A</variation>
    <location>
        <position position="49"/>
    </location>
</feature>
<feature type="mutagenesis site" description="Shows substantial farnesylation activity when FPP is used, while geranylation activity is severely reduced." evidence="4">
    <original>F</original>
    <variation>S</variation>
    <location>
        <position position="63"/>
    </location>
</feature>
<feature type="mutagenesis site" description="Severely impairs prenylation activity." evidence="4">
    <original>D</original>
    <variation>E</variation>
    <location>
        <position position="68"/>
    </location>
</feature>
<feature type="mutagenesis site" description="No change in ComX production or secretion." evidence="4">
    <original>T</original>
    <variation>L</variation>
    <location>
        <position position="92"/>
    </location>
</feature>
<feature type="mutagenesis site" description="No change in ComX production or secretion." evidence="4">
    <original>P</original>
    <variation>S</variation>
    <location>
        <position position="134"/>
    </location>
</feature>
<feature type="mutagenesis site" description="No change in ComX production or secretion." evidence="4">
    <original>T</original>
    <variation>I</variation>
    <location>
        <position position="152"/>
    </location>
</feature>
<feature type="mutagenesis site" description="Retains 37% of wild-type activity." evidence="3">
    <original>K</original>
    <variation>F</variation>
    <location>
        <position position="182"/>
    </location>
</feature>
<feature type="mutagenesis site" description="Retains 65% of wild-type activity." evidence="3">
    <original>QL</original>
    <variation>AA</variation>
    <location>
        <begin position="183"/>
        <end position="184"/>
    </location>
</feature>
<feature type="mutagenesis site" description="Retains 20% of wild-type activity." evidence="3">
    <original>N</original>
    <variation>A</variation>
    <location>
        <position position="186"/>
    </location>
</feature>
<feature type="mutagenesis site" description="Retains 9% of wild-type activity." evidence="3">
    <original>N</original>
    <variation>D</variation>
    <location>
        <position position="186"/>
    </location>
</feature>
<feature type="mutagenesis site" description="Cannot activate ComX." evidence="4">
    <original>N</original>
    <variation>G</variation>
    <location>
        <position position="186"/>
    </location>
</feature>
<feature type="mutagenesis site" description="Almost loss of activity." evidence="3">
    <original>D</original>
    <variation>A</variation>
    <variation>E</variation>
    <variation>N</variation>
    <location>
        <position position="187"/>
    </location>
</feature>
<feature type="mutagenesis site" description="Retains 54% of wild-type activity." evidence="3">
    <original>Y</original>
    <variation>A</variation>
    <location>
        <position position="188"/>
    </location>
</feature>
<feature type="mutagenesis site" description="Retains 47% of wild-type activity." evidence="3">
    <original>Y</original>
    <variation>A</variation>
    <location>
        <position position="189"/>
    </location>
</feature>
<feature type="mutagenesis site" description="Retains 87% of wild-type activity." evidence="3">
    <original>G</original>
    <variation>A</variation>
    <location>
        <position position="190"/>
    </location>
</feature>
<feature type="mutagenesis site" description="Retains 75% of wild-type activity." evidence="3">
    <original>G</original>
    <variation>D</variation>
    <location>
        <position position="190"/>
    </location>
</feature>
<feature type="mutagenesis site" description="Cannot activate ComX." evidence="4">
    <original>G</original>
    <variation>V</variation>
    <location>
        <position position="190"/>
    </location>
</feature>
<feature type="mutagenesis site" description="No change in ComX production or secretion." evidence="4">
    <original>K</original>
    <variation>N</variation>
    <location>
        <position position="202"/>
    </location>
</feature>
<feature type="mutagenesis site" description="No change in ComX production or secretion." evidence="4">
    <original>S</original>
    <variation>K</variation>
    <location>
        <position position="234"/>
    </location>
</feature>
<feature type="mutagenesis site" description="No change in ComX production or secretion." evidence="4">
    <original>E</original>
    <variation>K</variation>
    <location>
        <position position="248"/>
    </location>
</feature>
<evidence type="ECO:0000250" key="1">
    <source>
        <dbReference type="UniProtKB" id="P14324"/>
    </source>
</evidence>
<evidence type="ECO:0000269" key="2">
    <source>
    </source>
</evidence>
<evidence type="ECO:0000269" key="3">
    <source>
    </source>
</evidence>
<evidence type="ECO:0000269" key="4">
    <source>
    </source>
</evidence>
<evidence type="ECO:0000303" key="5">
    <source>
    </source>
</evidence>
<evidence type="ECO:0000305" key="6"/>
<protein>
    <recommendedName>
        <fullName evidence="6">Tryptophan prenyltransferase ComQ</fullName>
        <ecNumber evidence="2 3 4">2.5.1.-</ecNumber>
    </recommendedName>
    <alternativeName>
        <fullName evidence="6">Pre-ComX modifying enzyme</fullName>
    </alternativeName>
</protein>
<gene>
    <name evidence="5" type="primary">comQ</name>
</gene>
<comment type="function">
    <text evidence="2 3 4">Part of a major quorum-sensing system that regulates the development of genetic competence (PubMed:22197102). Involved in the maturation of the competence pheromone ComX (PubMed:22197102, PubMed:25036949). Acts by catalyzing the transfer of a geranyl group on the ComX pheromone (PubMed:22197102, PubMed:25036949, PubMed:31670609). Cannot use farnesyl diphosphate (FPP) (PubMed:31670609).</text>
</comment>
<comment type="catalytic activity">
    <reaction evidence="2 3 4">
        <text>L-tryptophyl-[protein] + (2E)-geranyl diphosphate = (2S,3R)-3-geranyl-2,3-dihydro-2,N(alpha)-cyclo-L-tryptophyl-[protein] + diphosphate</text>
        <dbReference type="Rhea" id="RHEA:59492"/>
        <dbReference type="Rhea" id="RHEA-COMP:15365"/>
        <dbReference type="Rhea" id="RHEA-COMP:15366"/>
        <dbReference type="ChEBI" id="CHEBI:29954"/>
        <dbReference type="ChEBI" id="CHEBI:33019"/>
        <dbReference type="ChEBI" id="CHEBI:58057"/>
        <dbReference type="ChEBI" id="CHEBI:141127"/>
    </reaction>
    <physiologicalReaction direction="left-to-right" evidence="2 3 4">
        <dbReference type="Rhea" id="RHEA:59493"/>
    </physiologicalReaction>
</comment>
<comment type="cofactor">
    <cofactor evidence="2">
        <name>Mg(2+)</name>
        <dbReference type="ChEBI" id="CHEBI:18420"/>
    </cofactor>
    <text evidence="1">Binds 2 Mg(2+) ions per subunit.</text>
</comment>
<comment type="biophysicochemical properties">
    <phDependence>
        <text evidence="2">Optimum pH is 8.0-9.5.</text>
    </phDependence>
    <temperatureDependence>
        <text evidence="2">Optimum temperature is 37 degrees Celsius.</text>
    </temperatureDependence>
</comment>
<comment type="subcellular location">
    <subcellularLocation>
        <location evidence="2">Cell membrane</location>
    </subcellularLocation>
</comment>
<comment type="similarity">
    <text evidence="6">Belongs to the FPP/GGPP synthase family.</text>
</comment>
<dbReference type="EC" id="2.5.1.-" evidence="2 3 4"/>
<dbReference type="EMBL" id="AF456138">
    <property type="protein sequence ID" value="AAL67739.1"/>
    <property type="molecule type" value="Genomic_DNA"/>
</dbReference>
<dbReference type="EMBL" id="DQ241785">
    <property type="protein sequence ID" value="ABB51993.1"/>
    <property type="molecule type" value="Genomic_DNA"/>
</dbReference>
<dbReference type="SMR" id="P0DV09"/>
<dbReference type="GO" id="GO:0005886">
    <property type="term" value="C:plasma membrane"/>
    <property type="evidence" value="ECO:0007669"/>
    <property type="project" value="UniProtKB-SubCell"/>
</dbReference>
<dbReference type="GO" id="GO:0046872">
    <property type="term" value="F:metal ion binding"/>
    <property type="evidence" value="ECO:0007669"/>
    <property type="project" value="UniProtKB-KW"/>
</dbReference>
<dbReference type="GO" id="GO:0004659">
    <property type="term" value="F:prenyltransferase activity"/>
    <property type="evidence" value="ECO:0007669"/>
    <property type="project" value="UniProtKB-KW"/>
</dbReference>
<dbReference type="GO" id="GO:0030420">
    <property type="term" value="P:establishment of competence for transformation"/>
    <property type="evidence" value="ECO:0007669"/>
    <property type="project" value="UniProtKB-KW"/>
</dbReference>
<dbReference type="GO" id="GO:0008299">
    <property type="term" value="P:isoprenoid biosynthetic process"/>
    <property type="evidence" value="ECO:0007669"/>
    <property type="project" value="InterPro"/>
</dbReference>
<dbReference type="CDD" id="cd00867">
    <property type="entry name" value="Trans_IPPS"/>
    <property type="match status" value="1"/>
</dbReference>
<dbReference type="Gene3D" id="1.10.600.10">
    <property type="entry name" value="Farnesyl Diphosphate Synthase"/>
    <property type="match status" value="1"/>
</dbReference>
<dbReference type="InterPro" id="IPR033965">
    <property type="entry name" value="ComQ"/>
</dbReference>
<dbReference type="InterPro" id="IPR008949">
    <property type="entry name" value="Isoprenoid_synthase_dom_sf"/>
</dbReference>
<dbReference type="InterPro" id="IPR000092">
    <property type="entry name" value="Polyprenyl_synt"/>
</dbReference>
<dbReference type="PANTHER" id="PTHR12001:SF69">
    <property type="entry name" value="ALL TRANS-POLYPRENYL-DIPHOSPHATE SYNTHASE PDSS1"/>
    <property type="match status" value="1"/>
</dbReference>
<dbReference type="PANTHER" id="PTHR12001">
    <property type="entry name" value="GERANYLGERANYL PYROPHOSPHATE SYNTHASE"/>
    <property type="match status" value="1"/>
</dbReference>
<dbReference type="Pfam" id="PF00348">
    <property type="entry name" value="polyprenyl_synt"/>
    <property type="match status" value="1"/>
</dbReference>
<dbReference type="SFLD" id="SFLDG01211">
    <property type="entry name" value="Competence_Regulatory_Protein"/>
    <property type="match status" value="1"/>
</dbReference>
<dbReference type="SFLD" id="SFLDS00005">
    <property type="entry name" value="Isoprenoid_Synthase_Type_I"/>
    <property type="match status" value="1"/>
</dbReference>
<dbReference type="SUPFAM" id="SSF48576">
    <property type="entry name" value="Terpenoid synthases"/>
    <property type="match status" value="1"/>
</dbReference>
<reference key="1">
    <citation type="journal article" date="2002" name="Mol. Microbiol.">
        <title>Specific activation of the Bacillus quorum-sensing systems by isoprenylated pheromone variants.</title>
        <authorList>
            <person name="Ansaldi M."/>
            <person name="Marolt D."/>
            <person name="Stebe T."/>
            <person name="Mandic-Mulec I."/>
            <person name="Dubnau D."/>
        </authorList>
    </citation>
    <scope>NUCLEOTIDE SEQUENCE [GENOMIC DNA]</scope>
    <source>
        <strain>RO-E-2 / NRRL B-23055</strain>
    </source>
</reference>
<reference key="2">
    <citation type="submission" date="2005-10" db="EMBL/GenBank/DDBJ databases">
        <title>Variability of Bacillus sp. quorum sensing system.</title>
        <authorList>
            <person name="Sabotic J."/>
            <person name="Cepon U."/>
            <person name="Cadez P."/>
            <person name="Mandic Mulec I."/>
        </authorList>
    </citation>
    <scope>NUCLEOTIDE SEQUENCE [GENOMIC DNA]</scope>
    <source>
        <strain>DV3-D-2 / NRRL B-23063</strain>
    </source>
</reference>
<reference key="3">
    <citation type="journal article" date="2012" name="FEBS Lett.">
        <title>Geranyl modification on the tryptophan residue of ComXRO-E-2 pheromone by a cell-free system.</title>
        <authorList>
            <person name="Tsuji F."/>
            <person name="Ishihara A."/>
            <person name="Kurata K."/>
            <person name="Nakagawa A."/>
            <person name="Okada M."/>
            <person name="Kitamura S."/>
            <person name="Kanamaru K."/>
            <person name="Masuda Y."/>
            <person name="Murakami K."/>
            <person name="Irie K."/>
            <person name="Sakagami Y."/>
        </authorList>
    </citation>
    <scope>FUNCTION</scope>
    <scope>CATALYTIC ACTIVITY</scope>
    <scope>COFACTOR</scope>
    <scope>BIOPHYSICOCHEMICAL PROPERTIES</scope>
    <scope>SUBCELLULAR LOCATION</scope>
    <source>
        <strain>RO-E-2 / NRRL B-23055</strain>
    </source>
</reference>
<reference key="4">
    <citation type="journal article" date="2014" name="Biosci. Biotechnol. Biochem.">
        <title>A region corresponding to second aspartate-rich motif in tryptophan isoprenylating enzyme, ComQ, serves as a substrate-binding site.</title>
        <authorList>
            <person name="Okada M."/>
            <person name="Ishihara A."/>
            <person name="Yamasaki R."/>
            <person name="Tsuji F."/>
            <person name="Hayashi S."/>
            <person name="Usami S."/>
            <person name="Sakagami Y."/>
        </authorList>
    </citation>
    <scope>FUNCTION</scope>
    <scope>CATALYTIC ACTIVITY</scope>
    <scope>MUTAGENESIS OF LYS-182; 183-GLN-LEU-184; ASN-186; ASP-187; TYR-188; TYR-189 AND GLY-190</scope>
    <source>
        <strain>RO-E-2 / NRRL B-23055</strain>
    </source>
</reference>
<reference key="5">
    <citation type="journal article" date="2020" name="Biosci. Biotechnol. Biochem.">
        <title>Identification of critical residues for the catalytic activity of ComQ, a Bacillus prenylation enzyme for quorum sensing, by using a simple bioassay system.</title>
        <authorList>
            <person name="Hirooka K."/>
            <person name="Shioda S."/>
            <person name="Okada M."/>
        </authorList>
    </citation>
    <scope>FUNCTION</scope>
    <scope>CATALYTIC ACTIVITY</scope>
    <scope>MUTAGENESIS OF ILE-49; PHE-63; ASP-68; THR-92; PRO-134; THR-152; ASN-186; GLY-190; LYS-202; SER-234 AND GLU-248</scope>
    <source>
        <strain>RO-E-2 / NRRL B-23055</strain>
    </source>
</reference>
<keyword id="KW-1003">Cell membrane</keyword>
<keyword id="KW-0178">Competence</keyword>
<keyword id="KW-0460">Magnesium</keyword>
<keyword id="KW-0472">Membrane</keyword>
<keyword id="KW-0479">Metal-binding</keyword>
<keyword id="KW-0637">Prenyltransferase</keyword>
<keyword id="KW-0808">Transferase</keyword>